<organism>
    <name type="scientific">Drosophila melanogaster</name>
    <name type="common">Fruit fly</name>
    <dbReference type="NCBI Taxonomy" id="7227"/>
    <lineage>
        <taxon>Eukaryota</taxon>
        <taxon>Metazoa</taxon>
        <taxon>Ecdysozoa</taxon>
        <taxon>Arthropoda</taxon>
        <taxon>Hexapoda</taxon>
        <taxon>Insecta</taxon>
        <taxon>Pterygota</taxon>
        <taxon>Neoptera</taxon>
        <taxon>Endopterygota</taxon>
        <taxon>Diptera</taxon>
        <taxon>Brachycera</taxon>
        <taxon>Muscomorpha</taxon>
        <taxon>Ephydroidea</taxon>
        <taxon>Drosophilidae</taxon>
        <taxon>Drosophila</taxon>
        <taxon>Sophophora</taxon>
    </lineage>
</organism>
<accession>P30975</accession>
<accession>Q8T0S8</accession>
<accession>Q9VAD2</accession>
<evidence type="ECO:0000255" key="1"/>
<evidence type="ECO:0000255" key="2">
    <source>
        <dbReference type="PROSITE-ProRule" id="PRU00521"/>
    </source>
</evidence>
<evidence type="ECO:0000256" key="3">
    <source>
        <dbReference type="SAM" id="MobiDB-lite"/>
    </source>
</evidence>
<evidence type="ECO:0000269" key="4">
    <source>
    </source>
</evidence>
<evidence type="ECO:0000305" key="5"/>
<dbReference type="EMBL" id="X62711">
    <property type="protein sequence ID" value="CAA44595.1"/>
    <property type="molecule type" value="mRNA"/>
</dbReference>
<dbReference type="EMBL" id="AE014297">
    <property type="protein sequence ID" value="AAF56979.2"/>
    <property type="molecule type" value="Genomic_DNA"/>
</dbReference>
<dbReference type="EMBL" id="AY069085">
    <property type="protein sequence ID" value="AAL39230.1"/>
    <property type="molecule type" value="mRNA"/>
</dbReference>
<dbReference type="PIR" id="S17783">
    <property type="entry name" value="S17783"/>
</dbReference>
<dbReference type="RefSeq" id="NP_524556.2">
    <property type="nucleotide sequence ID" value="NM_079832.3"/>
</dbReference>
<dbReference type="SMR" id="P30975"/>
<dbReference type="BioGRID" id="68408">
    <property type="interactions" value="9"/>
</dbReference>
<dbReference type="FunCoup" id="P30975">
    <property type="interactions" value="209"/>
</dbReference>
<dbReference type="STRING" id="7227.FBpp0303330"/>
<dbReference type="GlyCosmos" id="P30975">
    <property type="glycosylation" value="4 sites, No reported glycans"/>
</dbReference>
<dbReference type="GlyGen" id="P30975">
    <property type="glycosylation" value="5 sites"/>
</dbReference>
<dbReference type="PaxDb" id="7227-FBpp0084873"/>
<dbReference type="EnsemblMetazoa" id="FBtr0085507">
    <property type="protein sequence ID" value="FBpp0084873"/>
    <property type="gene ID" value="FBgn0004622"/>
</dbReference>
<dbReference type="GeneID" id="43551"/>
<dbReference type="KEGG" id="dme:Dmel_CG7887"/>
<dbReference type="AGR" id="FB:FBgn0004622"/>
<dbReference type="CTD" id="43551"/>
<dbReference type="FlyBase" id="FBgn0004622">
    <property type="gene designation" value="TkR99D"/>
</dbReference>
<dbReference type="VEuPathDB" id="VectorBase:FBgn0004622"/>
<dbReference type="eggNOG" id="KOG4219">
    <property type="taxonomic scope" value="Eukaryota"/>
</dbReference>
<dbReference type="GeneTree" id="ENSGT00940000155512"/>
<dbReference type="InParanoid" id="P30975"/>
<dbReference type="OMA" id="SILYACP"/>
<dbReference type="OrthoDB" id="5981855at2759"/>
<dbReference type="PhylomeDB" id="P30975"/>
<dbReference type="BioGRID-ORCS" id="43551">
    <property type="hits" value="0 hits in 3 CRISPR screens"/>
</dbReference>
<dbReference type="GenomeRNAi" id="43551"/>
<dbReference type="PRO" id="PR:P30975"/>
<dbReference type="Proteomes" id="UP000000803">
    <property type="component" value="Chromosome 3R"/>
</dbReference>
<dbReference type="Bgee" id="FBgn0004622">
    <property type="expression patterns" value="Expressed in adult abdominal pericardial cell (Drosophila) in dorsal vessel heart and 36 other cell types or tissues"/>
</dbReference>
<dbReference type="ExpressionAtlas" id="P30975">
    <property type="expression patterns" value="baseline and differential"/>
</dbReference>
<dbReference type="GO" id="GO:0016020">
    <property type="term" value="C:membrane"/>
    <property type="evidence" value="ECO:0000255"/>
    <property type="project" value="FlyBase"/>
</dbReference>
<dbReference type="GO" id="GO:0005886">
    <property type="term" value="C:plasma membrane"/>
    <property type="evidence" value="ECO:0000314"/>
    <property type="project" value="FlyBase"/>
</dbReference>
<dbReference type="GO" id="GO:0008188">
    <property type="term" value="F:neuropeptide receptor activity"/>
    <property type="evidence" value="ECO:0000255"/>
    <property type="project" value="FlyBase"/>
</dbReference>
<dbReference type="GO" id="GO:0004995">
    <property type="term" value="F:tachykinin receptor activity"/>
    <property type="evidence" value="ECO:0000314"/>
    <property type="project" value="FlyBase"/>
</dbReference>
<dbReference type="GO" id="GO:0050911">
    <property type="term" value="P:detection of chemical stimulus involved in sensory perception of smell"/>
    <property type="evidence" value="ECO:0000315"/>
    <property type="project" value="FlyBase"/>
</dbReference>
<dbReference type="GO" id="GO:0007186">
    <property type="term" value="P:G protein-coupled receptor signaling pathway"/>
    <property type="evidence" value="ECO:0000255"/>
    <property type="project" value="FlyBase"/>
</dbReference>
<dbReference type="GO" id="GO:0050805">
    <property type="term" value="P:negative regulation of synaptic transmission"/>
    <property type="evidence" value="ECO:0000315"/>
    <property type="project" value="FlyBase"/>
</dbReference>
<dbReference type="GO" id="GO:0007218">
    <property type="term" value="P:neuropeptide signaling pathway"/>
    <property type="evidence" value="ECO:0000314"/>
    <property type="project" value="FlyBase"/>
</dbReference>
<dbReference type="GO" id="GO:0042048">
    <property type="term" value="P:olfactory behavior"/>
    <property type="evidence" value="ECO:0000315"/>
    <property type="project" value="FlyBase"/>
</dbReference>
<dbReference type="GO" id="GO:1904058">
    <property type="term" value="P:positive regulation of sensory perception of pain"/>
    <property type="evidence" value="ECO:0000315"/>
    <property type="project" value="FlyBase"/>
</dbReference>
<dbReference type="GO" id="GO:0007217">
    <property type="term" value="P:tachykinin receptor signaling pathway"/>
    <property type="evidence" value="ECO:0000314"/>
    <property type="project" value="FlyBase"/>
</dbReference>
<dbReference type="CDD" id="cd15390">
    <property type="entry name" value="7tmA_TACR"/>
    <property type="match status" value="1"/>
</dbReference>
<dbReference type="FunFam" id="1.20.1070.10:FF:000559">
    <property type="entry name" value="tachykinin-like peptides receptor 99D"/>
    <property type="match status" value="1"/>
</dbReference>
<dbReference type="Gene3D" id="1.20.1070.10">
    <property type="entry name" value="Rhodopsin 7-helix transmembrane proteins"/>
    <property type="match status" value="1"/>
</dbReference>
<dbReference type="InterPro" id="IPR000276">
    <property type="entry name" value="GPCR_Rhodpsn"/>
</dbReference>
<dbReference type="InterPro" id="IPR017452">
    <property type="entry name" value="GPCR_Rhodpsn_7TM"/>
</dbReference>
<dbReference type="InterPro" id="IPR001681">
    <property type="entry name" value="Neurokn_rcpt"/>
</dbReference>
<dbReference type="PANTHER" id="PTHR46925">
    <property type="entry name" value="G-PROTEIN COUPLED RECEPTOR TKR-1-RELATED"/>
    <property type="match status" value="1"/>
</dbReference>
<dbReference type="PANTHER" id="PTHR46925:SF2">
    <property type="entry name" value="G-PROTEIN COUPLED RECEPTOR TKR-1-RELATED"/>
    <property type="match status" value="1"/>
</dbReference>
<dbReference type="Pfam" id="PF00001">
    <property type="entry name" value="7tm_1"/>
    <property type="match status" value="1"/>
</dbReference>
<dbReference type="PRINTS" id="PR00237">
    <property type="entry name" value="GPCRRHODOPSN"/>
</dbReference>
<dbReference type="PRINTS" id="PR00244">
    <property type="entry name" value="NEUROKININR"/>
</dbReference>
<dbReference type="SMART" id="SM01381">
    <property type="entry name" value="7TM_GPCR_Srsx"/>
    <property type="match status" value="1"/>
</dbReference>
<dbReference type="SUPFAM" id="SSF81321">
    <property type="entry name" value="Family A G protein-coupled receptor-like"/>
    <property type="match status" value="1"/>
</dbReference>
<dbReference type="PROSITE" id="PS00237">
    <property type="entry name" value="G_PROTEIN_RECEP_F1_1"/>
    <property type="match status" value="1"/>
</dbReference>
<dbReference type="PROSITE" id="PS50262">
    <property type="entry name" value="G_PROTEIN_RECEP_F1_2"/>
    <property type="match status" value="1"/>
</dbReference>
<protein>
    <recommendedName>
        <fullName>Tachykinin-like peptides receptor 99D</fullName>
    </recommendedName>
    <alternativeName>
        <fullName>Tachykinin-like receptor at 99D</fullName>
    </alternativeName>
    <alternativeName>
        <fullName>dTKR</fullName>
    </alternativeName>
</protein>
<name>TLR2_DROME</name>
<gene>
    <name type="primary">TkR99D</name>
    <name type="synonym">Takr99D</name>
    <name type="ORF">CG7887</name>
</gene>
<proteinExistence type="evidence at transcript level"/>
<reference key="1">
    <citation type="journal article" date="1991" name="EMBO J.">
        <title>Cloning, heterologous expression and developmental regulation of a Drosophila receptor for tachykinin-like peptides.</title>
        <authorList>
            <person name="Li X.-J."/>
            <person name="Wolfgang W."/>
            <person name="Wu Y.-N."/>
            <person name="North R.A."/>
            <person name="Forte M.A."/>
        </authorList>
    </citation>
    <scope>NUCLEOTIDE SEQUENCE [MRNA]</scope>
    <scope>FUNCTION</scope>
    <scope>SUBCELLULAR LOCATION</scope>
    <scope>TISSUE SPECIFICITY</scope>
    <scope>DEVELOPMENTAL STAGE</scope>
    <source>
        <strain>Canton-S</strain>
    </source>
</reference>
<reference key="2">
    <citation type="journal article" date="2000" name="Science">
        <title>The genome sequence of Drosophila melanogaster.</title>
        <authorList>
            <person name="Adams M.D."/>
            <person name="Celniker S.E."/>
            <person name="Holt R.A."/>
            <person name="Evans C.A."/>
            <person name="Gocayne J.D."/>
            <person name="Amanatides P.G."/>
            <person name="Scherer S.E."/>
            <person name="Li P.W."/>
            <person name="Hoskins R.A."/>
            <person name="Galle R.F."/>
            <person name="George R.A."/>
            <person name="Lewis S.E."/>
            <person name="Richards S."/>
            <person name="Ashburner M."/>
            <person name="Henderson S.N."/>
            <person name="Sutton G.G."/>
            <person name="Wortman J.R."/>
            <person name="Yandell M.D."/>
            <person name="Zhang Q."/>
            <person name="Chen L.X."/>
            <person name="Brandon R.C."/>
            <person name="Rogers Y.-H.C."/>
            <person name="Blazej R.G."/>
            <person name="Champe M."/>
            <person name="Pfeiffer B.D."/>
            <person name="Wan K.H."/>
            <person name="Doyle C."/>
            <person name="Baxter E.G."/>
            <person name="Helt G."/>
            <person name="Nelson C.R."/>
            <person name="Miklos G.L.G."/>
            <person name="Abril J.F."/>
            <person name="Agbayani A."/>
            <person name="An H.-J."/>
            <person name="Andrews-Pfannkoch C."/>
            <person name="Baldwin D."/>
            <person name="Ballew R.M."/>
            <person name="Basu A."/>
            <person name="Baxendale J."/>
            <person name="Bayraktaroglu L."/>
            <person name="Beasley E.M."/>
            <person name="Beeson K.Y."/>
            <person name="Benos P.V."/>
            <person name="Berman B.P."/>
            <person name="Bhandari D."/>
            <person name="Bolshakov S."/>
            <person name="Borkova D."/>
            <person name="Botchan M.R."/>
            <person name="Bouck J."/>
            <person name="Brokstein P."/>
            <person name="Brottier P."/>
            <person name="Burtis K.C."/>
            <person name="Busam D.A."/>
            <person name="Butler H."/>
            <person name="Cadieu E."/>
            <person name="Center A."/>
            <person name="Chandra I."/>
            <person name="Cherry J.M."/>
            <person name="Cawley S."/>
            <person name="Dahlke C."/>
            <person name="Davenport L.B."/>
            <person name="Davies P."/>
            <person name="de Pablos B."/>
            <person name="Delcher A."/>
            <person name="Deng Z."/>
            <person name="Mays A.D."/>
            <person name="Dew I."/>
            <person name="Dietz S.M."/>
            <person name="Dodson K."/>
            <person name="Doup L.E."/>
            <person name="Downes M."/>
            <person name="Dugan-Rocha S."/>
            <person name="Dunkov B.C."/>
            <person name="Dunn P."/>
            <person name="Durbin K.J."/>
            <person name="Evangelista C.C."/>
            <person name="Ferraz C."/>
            <person name="Ferriera S."/>
            <person name="Fleischmann W."/>
            <person name="Fosler C."/>
            <person name="Gabrielian A.E."/>
            <person name="Garg N.S."/>
            <person name="Gelbart W.M."/>
            <person name="Glasser K."/>
            <person name="Glodek A."/>
            <person name="Gong F."/>
            <person name="Gorrell J.H."/>
            <person name="Gu Z."/>
            <person name="Guan P."/>
            <person name="Harris M."/>
            <person name="Harris N.L."/>
            <person name="Harvey D.A."/>
            <person name="Heiman T.J."/>
            <person name="Hernandez J.R."/>
            <person name="Houck J."/>
            <person name="Hostin D."/>
            <person name="Houston K.A."/>
            <person name="Howland T.J."/>
            <person name="Wei M.-H."/>
            <person name="Ibegwam C."/>
            <person name="Jalali M."/>
            <person name="Kalush F."/>
            <person name="Karpen G.H."/>
            <person name="Ke Z."/>
            <person name="Kennison J.A."/>
            <person name="Ketchum K.A."/>
            <person name="Kimmel B.E."/>
            <person name="Kodira C.D."/>
            <person name="Kraft C.L."/>
            <person name="Kravitz S."/>
            <person name="Kulp D."/>
            <person name="Lai Z."/>
            <person name="Lasko P."/>
            <person name="Lei Y."/>
            <person name="Levitsky A.A."/>
            <person name="Li J.H."/>
            <person name="Li Z."/>
            <person name="Liang Y."/>
            <person name="Lin X."/>
            <person name="Liu X."/>
            <person name="Mattei B."/>
            <person name="McIntosh T.C."/>
            <person name="McLeod M.P."/>
            <person name="McPherson D."/>
            <person name="Merkulov G."/>
            <person name="Milshina N.V."/>
            <person name="Mobarry C."/>
            <person name="Morris J."/>
            <person name="Moshrefi A."/>
            <person name="Mount S.M."/>
            <person name="Moy M."/>
            <person name="Murphy B."/>
            <person name="Murphy L."/>
            <person name="Muzny D.M."/>
            <person name="Nelson D.L."/>
            <person name="Nelson D.R."/>
            <person name="Nelson K.A."/>
            <person name="Nixon K."/>
            <person name="Nusskern D.R."/>
            <person name="Pacleb J.M."/>
            <person name="Palazzolo M."/>
            <person name="Pittman G.S."/>
            <person name="Pan S."/>
            <person name="Pollard J."/>
            <person name="Puri V."/>
            <person name="Reese M.G."/>
            <person name="Reinert K."/>
            <person name="Remington K."/>
            <person name="Saunders R.D.C."/>
            <person name="Scheeler F."/>
            <person name="Shen H."/>
            <person name="Shue B.C."/>
            <person name="Siden-Kiamos I."/>
            <person name="Simpson M."/>
            <person name="Skupski M.P."/>
            <person name="Smith T.J."/>
            <person name="Spier E."/>
            <person name="Spradling A.C."/>
            <person name="Stapleton M."/>
            <person name="Strong R."/>
            <person name="Sun E."/>
            <person name="Svirskas R."/>
            <person name="Tector C."/>
            <person name="Turner R."/>
            <person name="Venter E."/>
            <person name="Wang A.H."/>
            <person name="Wang X."/>
            <person name="Wang Z.-Y."/>
            <person name="Wassarman D.A."/>
            <person name="Weinstock G.M."/>
            <person name="Weissenbach J."/>
            <person name="Williams S.M."/>
            <person name="Woodage T."/>
            <person name="Worley K.C."/>
            <person name="Wu D."/>
            <person name="Yang S."/>
            <person name="Yao Q.A."/>
            <person name="Ye J."/>
            <person name="Yeh R.-F."/>
            <person name="Zaveri J.S."/>
            <person name="Zhan M."/>
            <person name="Zhang G."/>
            <person name="Zhao Q."/>
            <person name="Zheng L."/>
            <person name="Zheng X.H."/>
            <person name="Zhong F.N."/>
            <person name="Zhong W."/>
            <person name="Zhou X."/>
            <person name="Zhu S.C."/>
            <person name="Zhu X."/>
            <person name="Smith H.O."/>
            <person name="Gibbs R.A."/>
            <person name="Myers E.W."/>
            <person name="Rubin G.M."/>
            <person name="Venter J.C."/>
        </authorList>
    </citation>
    <scope>NUCLEOTIDE SEQUENCE [LARGE SCALE GENOMIC DNA]</scope>
    <source>
        <strain>Berkeley</strain>
    </source>
</reference>
<reference key="3">
    <citation type="journal article" date="2002" name="Genome Biol.">
        <title>Annotation of the Drosophila melanogaster euchromatic genome: a systematic review.</title>
        <authorList>
            <person name="Misra S."/>
            <person name="Crosby M.A."/>
            <person name="Mungall C.J."/>
            <person name="Matthews B.B."/>
            <person name="Campbell K.S."/>
            <person name="Hradecky P."/>
            <person name="Huang Y."/>
            <person name="Kaminker J.S."/>
            <person name="Millburn G.H."/>
            <person name="Prochnik S.E."/>
            <person name="Smith C.D."/>
            <person name="Tupy J.L."/>
            <person name="Whitfield E.J."/>
            <person name="Bayraktaroglu L."/>
            <person name="Berman B.P."/>
            <person name="Bettencourt B.R."/>
            <person name="Celniker S.E."/>
            <person name="de Grey A.D.N.J."/>
            <person name="Drysdale R.A."/>
            <person name="Harris N.L."/>
            <person name="Richter J."/>
            <person name="Russo S."/>
            <person name="Schroeder A.J."/>
            <person name="Shu S.Q."/>
            <person name="Stapleton M."/>
            <person name="Yamada C."/>
            <person name="Ashburner M."/>
            <person name="Gelbart W.M."/>
            <person name="Rubin G.M."/>
            <person name="Lewis S.E."/>
        </authorList>
    </citation>
    <scope>GENOME REANNOTATION</scope>
    <source>
        <strain>Berkeley</strain>
    </source>
</reference>
<reference key="4">
    <citation type="journal article" date="2002" name="Genome Biol.">
        <title>A Drosophila full-length cDNA resource.</title>
        <authorList>
            <person name="Stapleton M."/>
            <person name="Carlson J.W."/>
            <person name="Brokstein P."/>
            <person name="Yu C."/>
            <person name="Champe M."/>
            <person name="George R.A."/>
            <person name="Guarin H."/>
            <person name="Kronmiller B."/>
            <person name="Pacleb J.M."/>
            <person name="Park S."/>
            <person name="Wan K.H."/>
            <person name="Rubin G.M."/>
            <person name="Celniker S.E."/>
        </authorList>
    </citation>
    <scope>NUCLEOTIDE SEQUENCE [LARGE SCALE MRNA]</scope>
    <source>
        <strain>Berkeley</strain>
        <tissue>Head</tissue>
    </source>
</reference>
<keyword id="KW-1003">Cell membrane</keyword>
<keyword id="KW-1015">Disulfide bond</keyword>
<keyword id="KW-0297">G-protein coupled receptor</keyword>
<keyword id="KW-0325">Glycoprotein</keyword>
<keyword id="KW-0449">Lipoprotein</keyword>
<keyword id="KW-0472">Membrane</keyword>
<keyword id="KW-0564">Palmitate</keyword>
<keyword id="KW-0675">Receptor</keyword>
<keyword id="KW-1185">Reference proteome</keyword>
<keyword id="KW-0807">Transducer</keyword>
<keyword id="KW-0812">Transmembrane</keyword>
<keyword id="KW-1133">Transmembrane helix</keyword>
<sequence length="519" mass="58396">MENRSDFEADDYGDISWSNWSNWSTPAGVLFSAMSSVLSASNHTPLPDFGQELALSTSSFNHSQTLSTDLPAVGDVEDAAEDAAASMETGSFAFVVPWWRQVLWSILFGGMVIVATGGNLIVVWIVMTTKRMRTVTNYFIVNLSIADAMVSSLNVTFNYYYMLDSDWPFGEFYCKLSQFIAMLSICASVFTLMAISIDRYVAIIRPLQPRMSKRCNLAIAAVIWLASTLISCPMMIIYRTEEVPVRGLSNRTVCYPEWPDGPTNHSTMESLYNILIIILTYFLPIVSMTVTYSRVGIELWGSKTIGECTPRQVENVRSKRRVVKMMIVVVLIFAICWLPFHSYFIITSCYPAITEAPFIQELYLAIYWLAMSNSMYNPIIYCWMNSRFRYGFKMVFRWCLFVRVGTEPFSRRENLTSRYSCSGSPDHNRIKRNDTQKSILYTCPSSPKSHRISHSGTGRSATLRNSLPAESLSSGGSGGGGHRKRLSYQQEMQQRWSGPNSATAVTNSSSTANTTQLLS</sequence>
<comment type="function">
    <text evidence="4">Receptor for tachykinin-like peptides.</text>
</comment>
<comment type="subcellular location">
    <subcellularLocation>
        <location evidence="4">Cell membrane</location>
        <topology evidence="4">Multi-pass membrane protein</topology>
    </subcellularLocation>
</comment>
<comment type="tissue specificity">
    <text evidence="4">During late embryogenesis (stages 11-15), expressed in the brain and in a specific subset of neurons in each neuromere of the developing ventral ganglion. Expressed in the cortex of the adult brain, which contains the neuronal cell bodies.</text>
</comment>
<comment type="developmental stage">
    <text evidence="4">Expressed throughout development and in the adult. Highest level of expression observed during late embryogenesis.</text>
</comment>
<comment type="similarity">
    <text evidence="2">Belongs to the G-protein coupled receptor 1 family.</text>
</comment>
<feature type="chain" id="PRO_0000070185" description="Tachykinin-like peptides receptor 99D">
    <location>
        <begin position="1"/>
        <end position="519"/>
    </location>
</feature>
<feature type="topological domain" description="Extracellular" evidence="1">
    <location>
        <begin position="1"/>
        <end position="100"/>
    </location>
</feature>
<feature type="transmembrane region" description="Helical; Name=1" evidence="1">
    <location>
        <begin position="101"/>
        <end position="123"/>
    </location>
</feature>
<feature type="topological domain" description="Cytoplasmic" evidence="1">
    <location>
        <begin position="124"/>
        <end position="134"/>
    </location>
</feature>
<feature type="transmembrane region" description="Helical; Name=2" evidence="1">
    <location>
        <begin position="135"/>
        <end position="155"/>
    </location>
</feature>
<feature type="topological domain" description="Extracellular" evidence="1">
    <location>
        <begin position="156"/>
        <end position="175"/>
    </location>
</feature>
<feature type="transmembrane region" description="Helical; Name=3" evidence="1">
    <location>
        <begin position="176"/>
        <end position="197"/>
    </location>
</feature>
<feature type="topological domain" description="Cytoplasmic" evidence="1">
    <location>
        <begin position="198"/>
        <end position="217"/>
    </location>
</feature>
<feature type="transmembrane region" description="Helical; Name=4" evidence="1">
    <location>
        <begin position="218"/>
        <end position="238"/>
    </location>
</feature>
<feature type="topological domain" description="Extracellular" evidence="1">
    <location>
        <begin position="239"/>
        <end position="270"/>
    </location>
</feature>
<feature type="transmembrane region" description="Helical; Name=5" evidence="1">
    <location>
        <begin position="271"/>
        <end position="292"/>
    </location>
</feature>
<feature type="topological domain" description="Cytoplasmic" evidence="1">
    <location>
        <begin position="293"/>
        <end position="324"/>
    </location>
</feature>
<feature type="transmembrane region" description="Helical; Name=6" evidence="1">
    <location>
        <begin position="325"/>
        <end position="346"/>
    </location>
</feature>
<feature type="topological domain" description="Extracellular" evidence="1">
    <location>
        <begin position="347"/>
        <end position="361"/>
    </location>
</feature>
<feature type="transmembrane region" description="Helical; Name=7" evidence="1">
    <location>
        <begin position="362"/>
        <end position="384"/>
    </location>
</feature>
<feature type="topological domain" description="Cytoplasmic" evidence="1">
    <location>
        <begin position="385"/>
        <end position="519"/>
    </location>
</feature>
<feature type="region of interest" description="Disordered" evidence="3">
    <location>
        <begin position="444"/>
        <end position="519"/>
    </location>
</feature>
<feature type="compositionally biased region" description="Polar residues" evidence="3">
    <location>
        <begin position="454"/>
        <end position="465"/>
    </location>
</feature>
<feature type="compositionally biased region" description="Polar residues" evidence="3">
    <location>
        <begin position="487"/>
        <end position="499"/>
    </location>
</feature>
<feature type="compositionally biased region" description="Low complexity" evidence="3">
    <location>
        <begin position="500"/>
        <end position="519"/>
    </location>
</feature>
<feature type="lipid moiety-binding region" description="S-palmitoyl cysteine" evidence="1">
    <location>
        <position position="399"/>
    </location>
</feature>
<feature type="glycosylation site" description="N-linked (GlcNAc...) asparagine" evidence="1">
    <location>
        <position position="3"/>
    </location>
</feature>
<feature type="glycosylation site" description="N-linked (GlcNAc...) asparagine" evidence="1">
    <location>
        <position position="19"/>
    </location>
</feature>
<feature type="glycosylation site" description="N-linked (GlcNAc...) asparagine" evidence="1">
    <location>
        <position position="22"/>
    </location>
</feature>
<feature type="glycosylation site" description="N-linked (GlcNAc...) asparagine" evidence="1">
    <location>
        <position position="61"/>
    </location>
</feature>
<feature type="disulfide bond" evidence="2">
    <location>
        <begin position="174"/>
        <end position="254"/>
    </location>
</feature>
<feature type="sequence conflict" description="In Ref. 1." evidence="5" ref="1">
    <original>LPDFGQELALSTS</original>
    <variation>CRTLARSSPYPPV</variation>
    <location>
        <begin position="46"/>
        <end position="58"/>
    </location>
</feature>
<feature type="sequence conflict" description="In Ref. 4; AAL39230." evidence="5" ref="4">
    <original>I</original>
    <variation>T</variation>
    <location>
        <position position="345"/>
    </location>
</feature>
<feature type="sequence conflict" description="In Ref. 4; AAL39230." evidence="5" ref="4">
    <location>
        <begin position="456"/>
        <end position="457"/>
    </location>
</feature>